<comment type="similarity">
    <text evidence="1">Belongs to the bacterial ribosomal protein bL28 family.</text>
</comment>
<keyword id="KW-0687">Ribonucleoprotein</keyword>
<keyword id="KW-0689">Ribosomal protein</keyword>
<protein>
    <recommendedName>
        <fullName evidence="1">Large ribosomal subunit protein bL28</fullName>
    </recommendedName>
    <alternativeName>
        <fullName evidence="2">50S ribosomal protein L28</fullName>
    </alternativeName>
</protein>
<gene>
    <name evidence="1" type="primary">rpmB</name>
    <name type="ordered locus">RPD_0283</name>
</gene>
<sequence>MSRRCELTAKGVQTGHKVSHSNIKTKRRFLPNLVNVTFLSDALGRPVRLRVSTNALKSVDHRGGLDAFLAKASIAELSPKAAELKRAIAKKKAGEPAAAAS</sequence>
<evidence type="ECO:0000255" key="1">
    <source>
        <dbReference type="HAMAP-Rule" id="MF_00373"/>
    </source>
</evidence>
<evidence type="ECO:0000305" key="2"/>
<reference key="1">
    <citation type="submission" date="2006-03" db="EMBL/GenBank/DDBJ databases">
        <title>Complete sequence of Rhodopseudomonas palustris BisB5.</title>
        <authorList>
            <consortium name="US DOE Joint Genome Institute"/>
            <person name="Copeland A."/>
            <person name="Lucas S."/>
            <person name="Lapidus A."/>
            <person name="Barry K."/>
            <person name="Detter J.C."/>
            <person name="Glavina del Rio T."/>
            <person name="Hammon N."/>
            <person name="Israni S."/>
            <person name="Dalin E."/>
            <person name="Tice H."/>
            <person name="Pitluck S."/>
            <person name="Chain P."/>
            <person name="Malfatti S."/>
            <person name="Shin M."/>
            <person name="Vergez L."/>
            <person name="Schmutz J."/>
            <person name="Larimer F."/>
            <person name="Land M."/>
            <person name="Hauser L."/>
            <person name="Pelletier D.A."/>
            <person name="Kyrpides N."/>
            <person name="Lykidis A."/>
            <person name="Oda Y."/>
            <person name="Harwood C.S."/>
            <person name="Richardson P."/>
        </authorList>
    </citation>
    <scope>NUCLEOTIDE SEQUENCE [LARGE SCALE GENOMIC DNA]</scope>
    <source>
        <strain>BisB5</strain>
    </source>
</reference>
<feature type="chain" id="PRO_1000007331" description="Large ribosomal subunit protein bL28">
    <location>
        <begin position="1"/>
        <end position="101"/>
    </location>
</feature>
<organism>
    <name type="scientific">Rhodopseudomonas palustris (strain BisB5)</name>
    <dbReference type="NCBI Taxonomy" id="316057"/>
    <lineage>
        <taxon>Bacteria</taxon>
        <taxon>Pseudomonadati</taxon>
        <taxon>Pseudomonadota</taxon>
        <taxon>Alphaproteobacteria</taxon>
        <taxon>Hyphomicrobiales</taxon>
        <taxon>Nitrobacteraceae</taxon>
        <taxon>Rhodopseudomonas</taxon>
    </lineage>
</organism>
<proteinExistence type="inferred from homology"/>
<dbReference type="EMBL" id="CP000283">
    <property type="protein sequence ID" value="ABE37523.1"/>
    <property type="molecule type" value="Genomic_DNA"/>
</dbReference>
<dbReference type="SMR" id="Q13EG6"/>
<dbReference type="STRING" id="316057.RPD_0283"/>
<dbReference type="KEGG" id="rpd:RPD_0283"/>
<dbReference type="eggNOG" id="COG0227">
    <property type="taxonomic scope" value="Bacteria"/>
</dbReference>
<dbReference type="HOGENOM" id="CLU_064548_4_2_5"/>
<dbReference type="BioCyc" id="RPAL316057:RPD_RS01445-MONOMER"/>
<dbReference type="Proteomes" id="UP000001818">
    <property type="component" value="Chromosome"/>
</dbReference>
<dbReference type="GO" id="GO:0022625">
    <property type="term" value="C:cytosolic large ribosomal subunit"/>
    <property type="evidence" value="ECO:0007669"/>
    <property type="project" value="TreeGrafter"/>
</dbReference>
<dbReference type="GO" id="GO:0003735">
    <property type="term" value="F:structural constituent of ribosome"/>
    <property type="evidence" value="ECO:0007669"/>
    <property type="project" value="InterPro"/>
</dbReference>
<dbReference type="GO" id="GO:0006412">
    <property type="term" value="P:translation"/>
    <property type="evidence" value="ECO:0007669"/>
    <property type="project" value="UniProtKB-UniRule"/>
</dbReference>
<dbReference type="Gene3D" id="2.30.170.40">
    <property type="entry name" value="Ribosomal protein L28/L24"/>
    <property type="match status" value="1"/>
</dbReference>
<dbReference type="HAMAP" id="MF_00373">
    <property type="entry name" value="Ribosomal_bL28"/>
    <property type="match status" value="1"/>
</dbReference>
<dbReference type="InterPro" id="IPR026569">
    <property type="entry name" value="Ribosomal_bL28"/>
</dbReference>
<dbReference type="InterPro" id="IPR034704">
    <property type="entry name" value="Ribosomal_bL28/bL31-like_sf"/>
</dbReference>
<dbReference type="InterPro" id="IPR001383">
    <property type="entry name" value="Ribosomal_bL28_bact-type"/>
</dbReference>
<dbReference type="InterPro" id="IPR037147">
    <property type="entry name" value="Ribosomal_bL28_sf"/>
</dbReference>
<dbReference type="NCBIfam" id="TIGR00009">
    <property type="entry name" value="L28"/>
    <property type="match status" value="1"/>
</dbReference>
<dbReference type="PANTHER" id="PTHR13528">
    <property type="entry name" value="39S RIBOSOMAL PROTEIN L28, MITOCHONDRIAL"/>
    <property type="match status" value="1"/>
</dbReference>
<dbReference type="PANTHER" id="PTHR13528:SF2">
    <property type="entry name" value="LARGE RIBOSOMAL SUBUNIT PROTEIN BL28M"/>
    <property type="match status" value="1"/>
</dbReference>
<dbReference type="Pfam" id="PF00830">
    <property type="entry name" value="Ribosomal_L28"/>
    <property type="match status" value="1"/>
</dbReference>
<dbReference type="SUPFAM" id="SSF143800">
    <property type="entry name" value="L28p-like"/>
    <property type="match status" value="1"/>
</dbReference>
<accession>Q13EG6</accession>
<name>RL28_RHOPS</name>